<sequence>MPEDAAVAGGEAGALVLFSGGQDSATCLAWALDRFPHVETLGFDYGQRHWVELDRRAALRQGLTALDPAWGRRLGPDHTLALAALGEISDTALTRDSAIAFARDGLPNTFVPGRNLAFLTFAAALAYRRGLRHIVGGMCETDYSGYPDCRDDTIKALQVALNLGMERRFVLHTPLMWIDKAQTWALAETLGGRALVELVVEESHTCYLGERGARHEWGYGCGTCPACDLRAKGFSRYLAARAD</sequence>
<protein>
    <recommendedName>
        <fullName evidence="1">7-cyano-7-deazaguanine synthase</fullName>
        <ecNumber evidence="1">6.3.4.20</ecNumber>
    </recommendedName>
    <alternativeName>
        <fullName evidence="1">7-cyano-7-carbaguanine synthase</fullName>
    </alternativeName>
    <alternativeName>
        <fullName evidence="1">PreQ(0) synthase</fullName>
    </alternativeName>
    <alternativeName>
        <fullName evidence="1">Queuosine biosynthesis protein QueC</fullName>
    </alternativeName>
</protein>
<feature type="chain" id="PRO_1000215794" description="7-cyano-7-deazaguanine synthase">
    <location>
        <begin position="1"/>
        <end position="243"/>
    </location>
</feature>
<feature type="binding site" evidence="1">
    <location>
        <begin position="18"/>
        <end position="28"/>
    </location>
    <ligand>
        <name>ATP</name>
        <dbReference type="ChEBI" id="CHEBI:30616"/>
    </ligand>
</feature>
<feature type="binding site" evidence="1">
    <location>
        <position position="206"/>
    </location>
    <ligand>
        <name>Zn(2+)</name>
        <dbReference type="ChEBI" id="CHEBI:29105"/>
    </ligand>
</feature>
<feature type="binding site" evidence="1">
    <location>
        <position position="221"/>
    </location>
    <ligand>
        <name>Zn(2+)</name>
        <dbReference type="ChEBI" id="CHEBI:29105"/>
    </ligand>
</feature>
<feature type="binding site" evidence="1">
    <location>
        <position position="224"/>
    </location>
    <ligand>
        <name>Zn(2+)</name>
        <dbReference type="ChEBI" id="CHEBI:29105"/>
    </ligand>
</feature>
<feature type="binding site" evidence="1">
    <location>
        <position position="227"/>
    </location>
    <ligand>
        <name>Zn(2+)</name>
        <dbReference type="ChEBI" id="CHEBI:29105"/>
    </ligand>
</feature>
<dbReference type="EC" id="6.3.4.20" evidence="1"/>
<dbReference type="EMBL" id="CP001298">
    <property type="protein sequence ID" value="ACK82268.1"/>
    <property type="molecule type" value="Genomic_DNA"/>
</dbReference>
<dbReference type="RefSeq" id="WP_015950151.1">
    <property type="nucleotide sequence ID" value="NC_011757.1"/>
</dbReference>
<dbReference type="SMR" id="B7KR63"/>
<dbReference type="KEGG" id="mch:Mchl_1387"/>
<dbReference type="HOGENOM" id="CLU_081854_0_0_5"/>
<dbReference type="UniPathway" id="UPA00391"/>
<dbReference type="Proteomes" id="UP000002385">
    <property type="component" value="Chromosome"/>
</dbReference>
<dbReference type="GO" id="GO:0005524">
    <property type="term" value="F:ATP binding"/>
    <property type="evidence" value="ECO:0007669"/>
    <property type="project" value="UniProtKB-UniRule"/>
</dbReference>
<dbReference type="GO" id="GO:0016879">
    <property type="term" value="F:ligase activity, forming carbon-nitrogen bonds"/>
    <property type="evidence" value="ECO:0007669"/>
    <property type="project" value="UniProtKB-UniRule"/>
</dbReference>
<dbReference type="GO" id="GO:0008270">
    <property type="term" value="F:zinc ion binding"/>
    <property type="evidence" value="ECO:0007669"/>
    <property type="project" value="UniProtKB-UniRule"/>
</dbReference>
<dbReference type="GO" id="GO:0008616">
    <property type="term" value="P:queuosine biosynthetic process"/>
    <property type="evidence" value="ECO:0007669"/>
    <property type="project" value="UniProtKB-UniRule"/>
</dbReference>
<dbReference type="CDD" id="cd01995">
    <property type="entry name" value="QueC-like"/>
    <property type="match status" value="1"/>
</dbReference>
<dbReference type="Gene3D" id="3.40.50.620">
    <property type="entry name" value="HUPs"/>
    <property type="match status" value="1"/>
</dbReference>
<dbReference type="HAMAP" id="MF_01633">
    <property type="entry name" value="QueC"/>
    <property type="match status" value="1"/>
</dbReference>
<dbReference type="InterPro" id="IPR018317">
    <property type="entry name" value="QueC"/>
</dbReference>
<dbReference type="InterPro" id="IPR014729">
    <property type="entry name" value="Rossmann-like_a/b/a_fold"/>
</dbReference>
<dbReference type="NCBIfam" id="TIGR00364">
    <property type="entry name" value="7-cyano-7-deazaguanine synthase QueC"/>
    <property type="match status" value="1"/>
</dbReference>
<dbReference type="PANTHER" id="PTHR42914">
    <property type="entry name" value="7-CYANO-7-DEAZAGUANINE SYNTHASE"/>
    <property type="match status" value="1"/>
</dbReference>
<dbReference type="PANTHER" id="PTHR42914:SF1">
    <property type="entry name" value="7-CYANO-7-DEAZAGUANINE SYNTHASE"/>
    <property type="match status" value="1"/>
</dbReference>
<dbReference type="Pfam" id="PF06508">
    <property type="entry name" value="QueC"/>
    <property type="match status" value="1"/>
</dbReference>
<dbReference type="PIRSF" id="PIRSF006293">
    <property type="entry name" value="ExsB"/>
    <property type="match status" value="1"/>
</dbReference>
<dbReference type="SUPFAM" id="SSF52402">
    <property type="entry name" value="Adenine nucleotide alpha hydrolases-like"/>
    <property type="match status" value="1"/>
</dbReference>
<gene>
    <name evidence="1" type="primary">queC</name>
    <name type="ordered locus">Mchl_1387</name>
</gene>
<accession>B7KR63</accession>
<comment type="function">
    <text evidence="1">Catalyzes the ATP-dependent conversion of 7-carboxy-7-deazaguanine (CDG) to 7-cyano-7-deazaguanine (preQ(0)).</text>
</comment>
<comment type="catalytic activity">
    <reaction evidence="1">
        <text>7-carboxy-7-deazaguanine + NH4(+) + ATP = 7-cyano-7-deazaguanine + ADP + phosphate + H2O + H(+)</text>
        <dbReference type="Rhea" id="RHEA:27982"/>
        <dbReference type="ChEBI" id="CHEBI:15377"/>
        <dbReference type="ChEBI" id="CHEBI:15378"/>
        <dbReference type="ChEBI" id="CHEBI:28938"/>
        <dbReference type="ChEBI" id="CHEBI:30616"/>
        <dbReference type="ChEBI" id="CHEBI:43474"/>
        <dbReference type="ChEBI" id="CHEBI:45075"/>
        <dbReference type="ChEBI" id="CHEBI:61036"/>
        <dbReference type="ChEBI" id="CHEBI:456216"/>
        <dbReference type="EC" id="6.3.4.20"/>
    </reaction>
</comment>
<comment type="cofactor">
    <cofactor evidence="1">
        <name>Zn(2+)</name>
        <dbReference type="ChEBI" id="CHEBI:29105"/>
    </cofactor>
    <text evidence="1">Binds 1 zinc ion per subunit.</text>
</comment>
<comment type="pathway">
    <text evidence="1">Purine metabolism; 7-cyano-7-deazaguanine biosynthesis.</text>
</comment>
<comment type="similarity">
    <text evidence="1">Belongs to the QueC family.</text>
</comment>
<evidence type="ECO:0000255" key="1">
    <source>
        <dbReference type="HAMAP-Rule" id="MF_01633"/>
    </source>
</evidence>
<organism>
    <name type="scientific">Methylorubrum extorquens (strain CM4 / NCIMB 13688)</name>
    <name type="common">Methylobacterium extorquens</name>
    <dbReference type="NCBI Taxonomy" id="440085"/>
    <lineage>
        <taxon>Bacteria</taxon>
        <taxon>Pseudomonadati</taxon>
        <taxon>Pseudomonadota</taxon>
        <taxon>Alphaproteobacteria</taxon>
        <taxon>Hyphomicrobiales</taxon>
        <taxon>Methylobacteriaceae</taxon>
        <taxon>Methylorubrum</taxon>
    </lineage>
</organism>
<name>QUEC_METC4</name>
<keyword id="KW-0067">ATP-binding</keyword>
<keyword id="KW-0436">Ligase</keyword>
<keyword id="KW-0479">Metal-binding</keyword>
<keyword id="KW-0547">Nucleotide-binding</keyword>
<keyword id="KW-0671">Queuosine biosynthesis</keyword>
<keyword id="KW-0862">Zinc</keyword>
<proteinExistence type="inferred from homology"/>
<reference key="1">
    <citation type="submission" date="2008-12" db="EMBL/GenBank/DDBJ databases">
        <title>Complete sequence of chromosome of Methylobacterium chloromethanicum CM4.</title>
        <authorList>
            <consortium name="US DOE Joint Genome Institute"/>
            <person name="Lucas S."/>
            <person name="Copeland A."/>
            <person name="Lapidus A."/>
            <person name="Glavina del Rio T."/>
            <person name="Dalin E."/>
            <person name="Tice H."/>
            <person name="Bruce D."/>
            <person name="Goodwin L."/>
            <person name="Pitluck S."/>
            <person name="Chertkov O."/>
            <person name="Brettin T."/>
            <person name="Detter J.C."/>
            <person name="Han C."/>
            <person name="Larimer F."/>
            <person name="Land M."/>
            <person name="Hauser L."/>
            <person name="Kyrpides N."/>
            <person name="Mikhailova N."/>
            <person name="Marx C."/>
            <person name="Richardson P."/>
        </authorList>
    </citation>
    <scope>NUCLEOTIDE SEQUENCE [LARGE SCALE GENOMIC DNA]</scope>
    <source>
        <strain>CM4 / NCIMB 13688</strain>
    </source>
</reference>